<name>MUTS_LACLM</name>
<evidence type="ECO:0000255" key="1">
    <source>
        <dbReference type="HAMAP-Rule" id="MF_00096"/>
    </source>
</evidence>
<sequence>MAEKISPGMQQYLDIKQDYPDAFLLFRMGDFYELFYEDAVNAAQILELTLTSRNKNSENPIPMAGVPHHAATEYIDKLVDLGYKVAVAEQMEDPKKAVGIVKRAVTQVITPGTTIDTANSVDNNFLVAIDFKAKRYALSYMDLSTGEFKVTELSEFSAVVGEIASLKAREIVVGFPLDEAQVKVFERQMNLLISEQFEIPENLLIELSGLTALENQAASKLLAYVKETQMRDLSHLQEVEHYEIKDFLQMDFATKSSLELTANKRENKKHGTLYWLLDETKTAMGTRMLRSWIDRPLVSNSAIQKRMEIVQVFLDHFFERSDLIEALKGVYDLERLASRVSFGKAVPVDFLQLANSLSNVPAIKNILEVLDEMPLNELRSQLDEIPELSGLINSAISENASRTITEGGIIKKGYNVQLDKYREALENGTSWIAKLEADEKAKTGISTLRIDYNRKDGYYFHITQSQLNSVPEHFYRKATLKNSERFGSQELTEIEEIMLEAREKSSSLEYDLFMGLRAETEQYIGRLQALAKTIAEIDCLQSLSVVAEKQGYIRPTLTEGSRIVEIKGGRHAVVEAVMGAQEYVPNDIELPEQTDIQLITGPNMSGKSTYMRQFALTVIMAQIGSFVPAETANLPIFDAIFTRIGASDNLISGESTFMVEMSEANHAIQKATSRSLIIFDELGRGTATYDGMALAQAIIEYVHEHIGAKTLFATHYHELTDLDKELDHLDNVHVATLEQNGNVTFLHKITDGPADKSYGIHVAKIAGLPQTLLERADLILQKLENKPLPAKKVADEQEQLSLFDFAENSSEIIEKIKGQNVDNMTAREALNFLWELKDSL</sequence>
<protein>
    <recommendedName>
        <fullName evidence="1">DNA mismatch repair protein MutS</fullName>
    </recommendedName>
</protein>
<proteinExistence type="inferred from homology"/>
<keyword id="KW-0067">ATP-binding</keyword>
<keyword id="KW-0227">DNA damage</keyword>
<keyword id="KW-0234">DNA repair</keyword>
<keyword id="KW-0238">DNA-binding</keyword>
<keyword id="KW-0547">Nucleotide-binding</keyword>
<dbReference type="EMBL" id="AM406671">
    <property type="protein sequence ID" value="CAL99055.1"/>
    <property type="molecule type" value="Genomic_DNA"/>
</dbReference>
<dbReference type="RefSeq" id="WP_011836120.1">
    <property type="nucleotide sequence ID" value="NC_009004.1"/>
</dbReference>
<dbReference type="SMR" id="A2RP10"/>
<dbReference type="STRING" id="416870.llmg_2491"/>
<dbReference type="KEGG" id="llm:llmg_2491"/>
<dbReference type="eggNOG" id="COG0249">
    <property type="taxonomic scope" value="Bacteria"/>
</dbReference>
<dbReference type="HOGENOM" id="CLU_002472_3_1_9"/>
<dbReference type="OrthoDB" id="9802448at2"/>
<dbReference type="PhylomeDB" id="A2RP10"/>
<dbReference type="Proteomes" id="UP000000364">
    <property type="component" value="Chromosome"/>
</dbReference>
<dbReference type="GO" id="GO:0005829">
    <property type="term" value="C:cytosol"/>
    <property type="evidence" value="ECO:0007669"/>
    <property type="project" value="TreeGrafter"/>
</dbReference>
<dbReference type="GO" id="GO:0005524">
    <property type="term" value="F:ATP binding"/>
    <property type="evidence" value="ECO:0007669"/>
    <property type="project" value="UniProtKB-UniRule"/>
</dbReference>
<dbReference type="GO" id="GO:0140664">
    <property type="term" value="F:ATP-dependent DNA damage sensor activity"/>
    <property type="evidence" value="ECO:0007669"/>
    <property type="project" value="InterPro"/>
</dbReference>
<dbReference type="GO" id="GO:0003684">
    <property type="term" value="F:damaged DNA binding"/>
    <property type="evidence" value="ECO:0007669"/>
    <property type="project" value="UniProtKB-UniRule"/>
</dbReference>
<dbReference type="GO" id="GO:0030983">
    <property type="term" value="F:mismatched DNA binding"/>
    <property type="evidence" value="ECO:0007669"/>
    <property type="project" value="InterPro"/>
</dbReference>
<dbReference type="GO" id="GO:0006298">
    <property type="term" value="P:mismatch repair"/>
    <property type="evidence" value="ECO:0007669"/>
    <property type="project" value="UniProtKB-UniRule"/>
</dbReference>
<dbReference type="CDD" id="cd03284">
    <property type="entry name" value="ABC_MutS1"/>
    <property type="match status" value="1"/>
</dbReference>
<dbReference type="FunFam" id="1.10.1420.10:FF:000001">
    <property type="entry name" value="DNA mismatch repair protein MutS"/>
    <property type="match status" value="1"/>
</dbReference>
<dbReference type="FunFam" id="3.40.1170.10:FF:000001">
    <property type="entry name" value="DNA mismatch repair protein MutS"/>
    <property type="match status" value="1"/>
</dbReference>
<dbReference type="FunFam" id="3.40.50.300:FF:000870">
    <property type="entry name" value="MutS protein homolog 4"/>
    <property type="match status" value="1"/>
</dbReference>
<dbReference type="Gene3D" id="1.10.1420.10">
    <property type="match status" value="2"/>
</dbReference>
<dbReference type="Gene3D" id="3.40.1170.10">
    <property type="entry name" value="DNA repair protein MutS, domain I"/>
    <property type="match status" value="1"/>
</dbReference>
<dbReference type="Gene3D" id="3.30.420.110">
    <property type="entry name" value="MutS, connector domain"/>
    <property type="match status" value="1"/>
</dbReference>
<dbReference type="Gene3D" id="3.40.50.300">
    <property type="entry name" value="P-loop containing nucleotide triphosphate hydrolases"/>
    <property type="match status" value="1"/>
</dbReference>
<dbReference type="HAMAP" id="MF_00096">
    <property type="entry name" value="MutS"/>
    <property type="match status" value="1"/>
</dbReference>
<dbReference type="InterPro" id="IPR005748">
    <property type="entry name" value="DNA_mismatch_repair_MutS"/>
</dbReference>
<dbReference type="InterPro" id="IPR007695">
    <property type="entry name" value="DNA_mismatch_repair_MutS-lik_N"/>
</dbReference>
<dbReference type="InterPro" id="IPR017261">
    <property type="entry name" value="DNA_mismatch_repair_MutS/MSH"/>
</dbReference>
<dbReference type="InterPro" id="IPR000432">
    <property type="entry name" value="DNA_mismatch_repair_MutS_C"/>
</dbReference>
<dbReference type="InterPro" id="IPR007861">
    <property type="entry name" value="DNA_mismatch_repair_MutS_clamp"/>
</dbReference>
<dbReference type="InterPro" id="IPR007696">
    <property type="entry name" value="DNA_mismatch_repair_MutS_core"/>
</dbReference>
<dbReference type="InterPro" id="IPR016151">
    <property type="entry name" value="DNA_mismatch_repair_MutS_N"/>
</dbReference>
<dbReference type="InterPro" id="IPR036187">
    <property type="entry name" value="DNA_mismatch_repair_MutS_sf"/>
</dbReference>
<dbReference type="InterPro" id="IPR007860">
    <property type="entry name" value="DNA_mmatch_repair_MutS_con_dom"/>
</dbReference>
<dbReference type="InterPro" id="IPR045076">
    <property type="entry name" value="MutS"/>
</dbReference>
<dbReference type="InterPro" id="IPR036678">
    <property type="entry name" value="MutS_con_dom_sf"/>
</dbReference>
<dbReference type="InterPro" id="IPR027417">
    <property type="entry name" value="P-loop_NTPase"/>
</dbReference>
<dbReference type="NCBIfam" id="TIGR01070">
    <property type="entry name" value="mutS1"/>
    <property type="match status" value="1"/>
</dbReference>
<dbReference type="NCBIfam" id="NF003810">
    <property type="entry name" value="PRK05399.1"/>
    <property type="match status" value="1"/>
</dbReference>
<dbReference type="PANTHER" id="PTHR11361:SF34">
    <property type="entry name" value="DNA MISMATCH REPAIR PROTEIN MSH1, MITOCHONDRIAL"/>
    <property type="match status" value="1"/>
</dbReference>
<dbReference type="PANTHER" id="PTHR11361">
    <property type="entry name" value="DNA MISMATCH REPAIR PROTEIN MUTS FAMILY MEMBER"/>
    <property type="match status" value="1"/>
</dbReference>
<dbReference type="Pfam" id="PF01624">
    <property type="entry name" value="MutS_I"/>
    <property type="match status" value="1"/>
</dbReference>
<dbReference type="Pfam" id="PF05188">
    <property type="entry name" value="MutS_II"/>
    <property type="match status" value="1"/>
</dbReference>
<dbReference type="Pfam" id="PF05192">
    <property type="entry name" value="MutS_III"/>
    <property type="match status" value="1"/>
</dbReference>
<dbReference type="Pfam" id="PF05190">
    <property type="entry name" value="MutS_IV"/>
    <property type="match status" value="1"/>
</dbReference>
<dbReference type="Pfam" id="PF00488">
    <property type="entry name" value="MutS_V"/>
    <property type="match status" value="1"/>
</dbReference>
<dbReference type="PIRSF" id="PIRSF037677">
    <property type="entry name" value="DNA_mis_repair_Msh6"/>
    <property type="match status" value="1"/>
</dbReference>
<dbReference type="SMART" id="SM00534">
    <property type="entry name" value="MUTSac"/>
    <property type="match status" value="1"/>
</dbReference>
<dbReference type="SMART" id="SM00533">
    <property type="entry name" value="MUTSd"/>
    <property type="match status" value="1"/>
</dbReference>
<dbReference type="SUPFAM" id="SSF55271">
    <property type="entry name" value="DNA repair protein MutS, domain I"/>
    <property type="match status" value="1"/>
</dbReference>
<dbReference type="SUPFAM" id="SSF53150">
    <property type="entry name" value="DNA repair protein MutS, domain II"/>
    <property type="match status" value="1"/>
</dbReference>
<dbReference type="SUPFAM" id="SSF48334">
    <property type="entry name" value="DNA repair protein MutS, domain III"/>
    <property type="match status" value="1"/>
</dbReference>
<dbReference type="SUPFAM" id="SSF52540">
    <property type="entry name" value="P-loop containing nucleoside triphosphate hydrolases"/>
    <property type="match status" value="1"/>
</dbReference>
<dbReference type="PROSITE" id="PS00486">
    <property type="entry name" value="DNA_MISMATCH_REPAIR_2"/>
    <property type="match status" value="1"/>
</dbReference>
<reference key="1">
    <citation type="journal article" date="2007" name="J. Bacteriol.">
        <title>The complete genome sequence of the lactic acid bacterial paradigm Lactococcus lactis subsp. cremoris MG1363.</title>
        <authorList>
            <person name="Wegmann U."/>
            <person name="O'Connell-Motherway M."/>
            <person name="Zomer A."/>
            <person name="Buist G."/>
            <person name="Shearman C."/>
            <person name="Canchaya C."/>
            <person name="Ventura M."/>
            <person name="Goesmann A."/>
            <person name="Gasson M.J."/>
            <person name="Kuipers O.P."/>
            <person name="van Sinderen D."/>
            <person name="Kok J."/>
        </authorList>
    </citation>
    <scope>NUCLEOTIDE SEQUENCE [LARGE SCALE GENOMIC DNA]</scope>
    <source>
        <strain>MG1363</strain>
    </source>
</reference>
<feature type="chain" id="PRO_0000335172" description="DNA mismatch repair protein MutS">
    <location>
        <begin position="1"/>
        <end position="840"/>
    </location>
</feature>
<feature type="binding site" evidence="1">
    <location>
        <begin position="601"/>
        <end position="608"/>
    </location>
    <ligand>
        <name>ATP</name>
        <dbReference type="ChEBI" id="CHEBI:30616"/>
    </ligand>
</feature>
<organism>
    <name type="scientific">Lactococcus lactis subsp. cremoris (strain MG1363)</name>
    <dbReference type="NCBI Taxonomy" id="416870"/>
    <lineage>
        <taxon>Bacteria</taxon>
        <taxon>Bacillati</taxon>
        <taxon>Bacillota</taxon>
        <taxon>Bacilli</taxon>
        <taxon>Lactobacillales</taxon>
        <taxon>Streptococcaceae</taxon>
        <taxon>Lactococcus</taxon>
        <taxon>Lactococcus cremoris subsp. cremoris</taxon>
    </lineage>
</organism>
<comment type="function">
    <text evidence="1">This protein is involved in the repair of mismatches in DNA. It is possible that it carries out the mismatch recognition step. This protein has a weak ATPase activity.</text>
</comment>
<comment type="similarity">
    <text evidence="1">Belongs to the DNA mismatch repair MutS family.</text>
</comment>
<accession>A2RP10</accession>
<gene>
    <name evidence="1" type="primary">mutS</name>
    <name type="ordered locus">llmg_2491</name>
</gene>